<reference key="1">
    <citation type="journal article" date="2000" name="Eur. J. Biochem.">
        <title>The gene encoding polyneuridine aldehyde esterase of monoterpenoid indole alkaloid biosynthesis in plants is an ortholog of the a/b hydrolase super family.</title>
        <authorList>
            <person name="Dogru E."/>
            <person name="Warzecha H."/>
            <person name="Seibel F."/>
            <person name="Haebel S."/>
            <person name="Lottspeich F."/>
            <person name="Stoeckigt J."/>
        </authorList>
    </citation>
    <scope>NUCLEOTIDE SEQUENCE [MRNA]</scope>
    <scope>CATALYTIC ACTIVITY</scope>
    <scope>PROTEIN SEQUENCE OF 7-23; 104-149; 208-217 AND 226-235</scope>
    <scope>FUNCTION</scope>
    <scope>PATHWAY</scope>
</reference>
<reference key="2">
    <citation type="journal article" date="2002" name="Eur. J. Biochem.">
        <title>Potential active-site residues in polyneuridine aldehyde esterase, a central enzyme of indole alkaloid biosynthesis, by modelling and site-directed mutagenesis.</title>
        <authorList>
            <person name="Mattern-Dogru E."/>
            <person name="Ma X."/>
            <person name="Hartmann J."/>
            <person name="Decker H."/>
            <person name="Stoeckigt J."/>
        </authorList>
    </citation>
    <scope>HOMODIMERIZATION</scope>
    <scope>CATALYTIC ACTIVITY</scope>
    <scope>ACTIVITY REGULATION</scope>
    <scope>ACTIVE SITES</scope>
    <scope>BIOPHYSICOCHEMICAL PROPERTIES</scope>
    <scope>MUTAGENESIS OF HIS-17; CYS-20; HIS-86; SER-87; CYS-132; GLY-152; CYS-170; CYS-213; ASP-216; HIS-244 AND CYS-257</scope>
    <scope>PATHWAY</scope>
</reference>
<reference key="3">
    <citation type="journal article" date="2024" name="Nat. Commun.">
        <title>De novo biosynthesis of antiarrhythmic alkaloid ajmaline.</title>
        <authorList>
            <person name="Guo J."/>
            <person name="Gao D."/>
            <person name="Lian J."/>
            <person name="Qu Y."/>
        </authorList>
    </citation>
    <scope>FUNCTION</scope>
    <scope>PATHWAY</scope>
    <scope>BIOTECHNOLOGY</scope>
    <scope>TISSUE SPECIFICITY</scope>
</reference>
<reference key="4">
    <citation type="journal article" date="2009" name="Angew. Chem. Int. Ed. Engl.">
        <title>Structural basis and enzymatic mechanism of the biosynthesis of C9- from C10-monoterpenoid indole alkaloids.</title>
        <authorList>
            <person name="Yang L."/>
            <person name="Hill M."/>
            <person name="Wang M."/>
            <person name="Panjikar S."/>
            <person name="Stockigt J."/>
        </authorList>
    </citation>
    <scope>X-RAY CRYSTALLOGRAPHY (2.10 ANGSTROMS) IN COMPLEX WITH 16-EPIVELLOSIMINE</scope>
</reference>
<accession>Q9SE93</accession>
<organism>
    <name type="scientific">Rauvolfia serpentina</name>
    <name type="common">Serpentine wood</name>
    <name type="synonym">Ophioxylon serpentinum</name>
    <dbReference type="NCBI Taxonomy" id="4060"/>
    <lineage>
        <taxon>Eukaryota</taxon>
        <taxon>Viridiplantae</taxon>
        <taxon>Streptophyta</taxon>
        <taxon>Embryophyta</taxon>
        <taxon>Tracheophyta</taxon>
        <taxon>Spermatophyta</taxon>
        <taxon>Magnoliopsida</taxon>
        <taxon>eudicotyledons</taxon>
        <taxon>Gunneridae</taxon>
        <taxon>Pentapetalae</taxon>
        <taxon>asterids</taxon>
        <taxon>lamiids</taxon>
        <taxon>Gentianales</taxon>
        <taxon>Apocynaceae</taxon>
        <taxon>Rauvolfioideae</taxon>
        <taxon>Vinceae</taxon>
        <taxon>Rauvolfiinae</taxon>
        <taxon>Rauvolfia</taxon>
    </lineage>
</organism>
<protein>
    <recommendedName>
        <fullName evidence="6 7">Polyneuridine aldehyde esterase</fullName>
        <shortName evidence="7">RsPNAE</shortName>
        <ecNumber evidence="2 3">3.1.1.78</ecNumber>
    </recommendedName>
</protein>
<feature type="propeptide" id="PRO_0000022077" evidence="2">
    <location>
        <begin position="1"/>
        <end position="6"/>
    </location>
</feature>
<feature type="chain" id="PRO_0000022078" description="Polyneuridine aldehyde esterase">
    <location>
        <begin position="7"/>
        <end position="264"/>
    </location>
</feature>
<feature type="domain" description="AB hydrolase-1" evidence="1">
    <location>
        <begin position="12"/>
        <end position="122"/>
    </location>
</feature>
<feature type="active site" evidence="3">
    <location>
        <position position="87"/>
    </location>
</feature>
<feature type="active site" evidence="3">
    <location>
        <position position="216"/>
    </location>
</feature>
<feature type="active site" evidence="3">
    <location>
        <position position="244"/>
    </location>
</feature>
<feature type="binding site" description="covalent" evidence="4 9">
    <location>
        <position position="87"/>
    </location>
    <ligand>
        <name>16-epivellosimine</name>
        <dbReference type="ChEBI" id="CHEBI:16425"/>
    </ligand>
</feature>
<feature type="mutagenesis site" description="No effect." evidence="3">
    <original>H</original>
    <variation>A</variation>
    <location>
        <position position="17"/>
    </location>
</feature>
<feature type="mutagenesis site" description="Loss of function." evidence="3">
    <original>C</original>
    <variation>A</variation>
    <location>
        <position position="20"/>
    </location>
</feature>
<feature type="mutagenesis site" description="Loss of function." evidence="3">
    <original>H</original>
    <variation>A</variation>
    <location>
        <position position="86"/>
    </location>
</feature>
<feature type="mutagenesis site" description="Loss of function." evidence="3">
    <original>S</original>
    <variation>A</variation>
    <location>
        <position position="87"/>
    </location>
</feature>
<feature type="mutagenesis site" description="No effect." evidence="3">
    <original>C</original>
    <variation>A</variation>
    <location>
        <position position="132"/>
    </location>
</feature>
<feature type="mutagenesis site" description="No effect; when associated with S-213." evidence="3">
    <original>G</original>
    <variation>Q</variation>
    <location>
        <position position="152"/>
    </location>
</feature>
<feature type="mutagenesis site" description="No effect." evidence="3">
    <original>C</original>
    <variation>A</variation>
    <location>
        <position position="170"/>
    </location>
</feature>
<feature type="mutagenesis site" description="No effect; when associated with Q-152." evidence="3">
    <original>C</original>
    <variation>S</variation>
    <location>
        <position position="213"/>
    </location>
</feature>
<feature type="mutagenesis site" description="Loss of function." evidence="3">
    <original>D</original>
    <variation>A</variation>
    <location>
        <position position="216"/>
    </location>
</feature>
<feature type="mutagenesis site" description="Loss of function." evidence="3">
    <original>H</original>
    <variation>A</variation>
    <location>
        <position position="244"/>
    </location>
</feature>
<feature type="mutagenesis site" description="No effect." evidence="3">
    <original>C</original>
    <variation>A</variation>
    <location>
        <position position="257"/>
    </location>
</feature>
<feature type="strand" evidence="10">
    <location>
        <begin position="12"/>
        <end position="16"/>
    </location>
</feature>
<feature type="helix" evidence="10">
    <location>
        <begin position="23"/>
        <end position="26"/>
    </location>
</feature>
<feature type="helix" evidence="10">
    <location>
        <begin position="29"/>
        <end position="35"/>
    </location>
</feature>
<feature type="strand" evidence="10">
    <location>
        <begin position="39"/>
        <end position="43"/>
    </location>
</feature>
<feature type="helix" evidence="10">
    <location>
        <begin position="55"/>
        <end position="57"/>
    </location>
</feature>
<feature type="helix" evidence="10">
    <location>
        <begin position="61"/>
        <end position="74"/>
    </location>
</feature>
<feature type="strand" evidence="10">
    <location>
        <begin position="81"/>
        <end position="86"/>
    </location>
</feature>
<feature type="helix" evidence="10">
    <location>
        <begin position="89"/>
        <end position="99"/>
    </location>
</feature>
<feature type="helix" evidence="10">
    <location>
        <begin position="101"/>
        <end position="103"/>
    </location>
</feature>
<feature type="strand" evidence="10">
    <location>
        <begin position="104"/>
        <end position="112"/>
    </location>
</feature>
<feature type="helix" evidence="10">
    <location>
        <begin position="123"/>
        <end position="131"/>
    </location>
</feature>
<feature type="turn" evidence="10">
    <location>
        <begin position="134"/>
        <end position="139"/>
    </location>
</feature>
<feature type="strand" evidence="10">
    <location>
        <begin position="141"/>
        <end position="146"/>
    </location>
</feature>
<feature type="strand" evidence="10">
    <location>
        <begin position="152"/>
        <end position="156"/>
    </location>
</feature>
<feature type="helix" evidence="10">
    <location>
        <begin position="159"/>
        <end position="165"/>
    </location>
</feature>
<feature type="helix" evidence="10">
    <location>
        <begin position="172"/>
        <end position="181"/>
    </location>
</feature>
<feature type="helix" evidence="10">
    <location>
        <begin position="189"/>
        <end position="192"/>
    </location>
</feature>
<feature type="turn" evidence="10">
    <location>
        <begin position="200"/>
        <end position="202"/>
    </location>
</feature>
<feature type="helix" evidence="10">
    <location>
        <begin position="203"/>
        <end position="205"/>
    </location>
</feature>
<feature type="strand" evidence="10">
    <location>
        <begin position="208"/>
        <end position="213"/>
    </location>
</feature>
<feature type="strand" evidence="10">
    <location>
        <begin position="217"/>
        <end position="219"/>
    </location>
</feature>
<feature type="helix" evidence="10">
    <location>
        <begin position="221"/>
        <end position="231"/>
    </location>
</feature>
<feature type="strand" evidence="10">
    <location>
        <begin position="234"/>
        <end position="239"/>
    </location>
</feature>
<feature type="helix" evidence="10">
    <location>
        <begin position="246"/>
        <end position="249"/>
    </location>
</feature>
<feature type="helix" evidence="10">
    <location>
        <begin position="251"/>
        <end position="262"/>
    </location>
</feature>
<dbReference type="EC" id="3.1.1.78" evidence="2 3"/>
<dbReference type="EMBL" id="AF178576">
    <property type="protein sequence ID" value="AAF22288.1"/>
    <property type="molecule type" value="mRNA"/>
</dbReference>
<dbReference type="PDB" id="2WFL">
    <property type="method" value="X-ray"/>
    <property type="resolution" value="2.10 A"/>
    <property type="chains" value="A/B=1-264"/>
</dbReference>
<dbReference type="PDB" id="2WFM">
    <property type="method" value="X-ray"/>
    <property type="resolution" value="2.20 A"/>
    <property type="chains" value="A/B/C/D/E=1-264"/>
</dbReference>
<dbReference type="PDB" id="3GZJ">
    <property type="method" value="X-ray"/>
    <property type="resolution" value="2.19 A"/>
    <property type="chains" value="A/B/C/D/E=7-264"/>
</dbReference>
<dbReference type="PDBsum" id="2WFL"/>
<dbReference type="PDBsum" id="2WFM"/>
<dbReference type="PDBsum" id="3GZJ"/>
<dbReference type="SMR" id="Q9SE93"/>
<dbReference type="ESTHER" id="rause-pnae">
    <property type="family name" value="Hydroxynitrile_lyase"/>
</dbReference>
<dbReference type="KEGG" id="ag:AAF22288"/>
<dbReference type="BioCyc" id="MetaCyc:MONOMER-7725"/>
<dbReference type="BRENDA" id="3.1.1.78">
    <property type="organism ID" value="5309"/>
</dbReference>
<dbReference type="UniPathway" id="UPA00310"/>
<dbReference type="EvolutionaryTrace" id="Q9SE93"/>
<dbReference type="GO" id="GO:0080030">
    <property type="term" value="F:methyl indole-3-acetate esterase activity"/>
    <property type="evidence" value="ECO:0007669"/>
    <property type="project" value="TreeGrafter"/>
</dbReference>
<dbReference type="GO" id="GO:0080032">
    <property type="term" value="F:methyl jasmonate esterase activity"/>
    <property type="evidence" value="ECO:0007669"/>
    <property type="project" value="TreeGrafter"/>
</dbReference>
<dbReference type="GO" id="GO:0080031">
    <property type="term" value="F:methyl salicylate esterase activity"/>
    <property type="evidence" value="ECO:0007669"/>
    <property type="project" value="TreeGrafter"/>
</dbReference>
<dbReference type="GO" id="GO:0050529">
    <property type="term" value="F:polyneuridine-aldehyde esterase activity"/>
    <property type="evidence" value="ECO:0000314"/>
    <property type="project" value="UniProtKB"/>
</dbReference>
<dbReference type="GO" id="GO:0035834">
    <property type="term" value="P:indole alkaloid metabolic process"/>
    <property type="evidence" value="ECO:0000314"/>
    <property type="project" value="UniProtKB"/>
</dbReference>
<dbReference type="GO" id="GO:0009694">
    <property type="term" value="P:jasmonic acid metabolic process"/>
    <property type="evidence" value="ECO:0007669"/>
    <property type="project" value="TreeGrafter"/>
</dbReference>
<dbReference type="GO" id="GO:0009696">
    <property type="term" value="P:salicylic acid metabolic process"/>
    <property type="evidence" value="ECO:0007669"/>
    <property type="project" value="TreeGrafter"/>
</dbReference>
<dbReference type="FunFam" id="3.40.50.1820:FF:000051">
    <property type="entry name" value="(S)-hydroxynitrile lyase"/>
    <property type="match status" value="1"/>
</dbReference>
<dbReference type="Gene3D" id="3.40.50.1820">
    <property type="entry name" value="alpha/beta hydrolase"/>
    <property type="match status" value="1"/>
</dbReference>
<dbReference type="InterPro" id="IPR000073">
    <property type="entry name" value="AB_hydrolase_1"/>
</dbReference>
<dbReference type="InterPro" id="IPR029058">
    <property type="entry name" value="AB_hydrolase_fold"/>
</dbReference>
<dbReference type="InterPro" id="IPR045889">
    <property type="entry name" value="MES/HNL"/>
</dbReference>
<dbReference type="PANTHER" id="PTHR10992:SF1083">
    <property type="entry name" value="METHYLESTERASE 1"/>
    <property type="match status" value="1"/>
</dbReference>
<dbReference type="PANTHER" id="PTHR10992">
    <property type="entry name" value="METHYLESTERASE FAMILY MEMBER"/>
    <property type="match status" value="1"/>
</dbReference>
<dbReference type="Pfam" id="PF00561">
    <property type="entry name" value="Abhydrolase_1"/>
    <property type="match status" value="1"/>
</dbReference>
<dbReference type="SUPFAM" id="SSF53474">
    <property type="entry name" value="alpha/beta-Hydrolases"/>
    <property type="match status" value="1"/>
</dbReference>
<name>PNAE_RAUSE</name>
<keyword id="KW-0002">3D-structure</keyword>
<keyword id="KW-0017">Alkaloid metabolism</keyword>
<keyword id="KW-0903">Direct protein sequencing</keyword>
<keyword id="KW-0378">Hydrolase</keyword>
<keyword id="KW-0719">Serine esterase</keyword>
<proteinExistence type="evidence at protein level"/>
<sequence>MHSAANAKQQKHFVLVHGGCLGAWIWYKLKPLLESAGHKVTAVDLSAAGINPRRLDEIHTFRDYSEPLMEVMASIPPDEKVVLLGHSFGGMSLGLAMETYPEKISVAVFMSAMMPDPNHSLTYPFEKYNEKCPADMMLDSQFSTYGNPENPGMSMILGPQFMALKMFQNCSVEDLELAKMLTRPGSLFFQDLAKAKKFSTERYGSVKRAYIFCNEDKSFPVEFQKWFVESVGADKVKEIKEADHMGMLSQPREVCKCLLDISDS</sequence>
<comment type="function">
    <text evidence="2 5">Hydrolase involved in the biosynthesis of ajmaline-type monoterpenoid indole alkaloids (MIAs) natural products, important plant-derived pharmaceuticals used in the therapy of heart disorders (PubMed:10691977, PubMed:38212296). Catalyzes the hydrolysis of polyneuridine aldehyde into epi-vellosimine, precursor of vomilenine, an intermediate chemical in the biosynthesis of ajmaline (PubMed:10691977).</text>
</comment>
<comment type="catalytic activity">
    <reaction evidence="2 3">
        <text>polyneuridine aldehyde + H2O = 16-epivellosimine + methanol + CO2</text>
        <dbReference type="Rhea" id="RHEA:17501"/>
        <dbReference type="ChEBI" id="CHEBI:15377"/>
        <dbReference type="ChEBI" id="CHEBI:16425"/>
        <dbReference type="ChEBI" id="CHEBI:16526"/>
        <dbReference type="ChEBI" id="CHEBI:16829"/>
        <dbReference type="ChEBI" id="CHEBI:17790"/>
        <dbReference type="EC" id="3.1.1.78"/>
    </reaction>
    <physiologicalReaction direction="left-to-right" evidence="2 3">
        <dbReference type="Rhea" id="RHEA:17502"/>
    </physiologicalReaction>
</comment>
<comment type="activity regulation">
    <text evidence="3">Inhibited by DEPC and HgCl(2).</text>
</comment>
<comment type="biophysicochemical properties">
    <kinetics>
        <KM evidence="3">36 uM for polyneuridine aldehyde</KM>
    </kinetics>
</comment>
<comment type="pathway">
    <text evidence="2 3 5">Alkaloid biosynthesis; ajmaline biosynthesis.</text>
</comment>
<comment type="subunit">
    <text evidence="3">Homodimer; homodimerizes in aqueous solutions at pH 7.0.</text>
</comment>
<comment type="tissue specificity">
    <text evidence="5">Mainly expressed in roots and, to a lower level, in leaves.</text>
</comment>
<comment type="biotechnology">
    <text evidence="5">The strictosidine aglycone-producing AJM7-DeltaHYS yeast strain expressing pathway genes of the VOM module, RsGS, SBE (GsSBE, RsSBE1 or RsSBE2), RsPNAE, RsVS and RsVH, accumulates vomilenine (PubMed:38212296). Additionnal expression of pathway genes of the AJM module, RsVR, RsDHVR, AAE (RsAAE1 or RsAAE2) and RsNNMT, leads to the production of ajmaline (PubMed:38212296). Ajmaline is an anti-arrhythmic alkaloid commercially used as an efficient drug for the treatment of arrhythmic heart disorder (PubMed:38212296).</text>
</comment>
<comment type="similarity">
    <text evidence="8">Belongs to the AB hydrolase superfamily.</text>
</comment>
<gene>
    <name evidence="6" type="primary">PNAE</name>
</gene>
<evidence type="ECO:0000255" key="1"/>
<evidence type="ECO:0000269" key="2">
    <source>
    </source>
</evidence>
<evidence type="ECO:0000269" key="3">
    <source>
    </source>
</evidence>
<evidence type="ECO:0000269" key="4">
    <source>
    </source>
</evidence>
<evidence type="ECO:0000269" key="5">
    <source>
    </source>
</evidence>
<evidence type="ECO:0000303" key="6">
    <source>
    </source>
</evidence>
<evidence type="ECO:0000303" key="7">
    <source>
    </source>
</evidence>
<evidence type="ECO:0000305" key="8"/>
<evidence type="ECO:0007744" key="9">
    <source>
        <dbReference type="PDB" id="3GZJ"/>
    </source>
</evidence>
<evidence type="ECO:0007829" key="10">
    <source>
        <dbReference type="PDB" id="2WFL"/>
    </source>
</evidence>